<comment type="function">
    <text evidence="6">Major role in the synthesis of nucleoside triphosphates other than ATP. The ATP gamma phosphate is transferred to the NDP beta phosphate via a ping-pong mechanism, using a phosphorylated active-site intermediate.</text>
</comment>
<comment type="catalytic activity">
    <reaction evidence="6">
        <text>a 2'-deoxyribonucleoside 5'-diphosphate + ATP = a 2'-deoxyribonucleoside 5'-triphosphate + ADP</text>
        <dbReference type="Rhea" id="RHEA:44640"/>
        <dbReference type="ChEBI" id="CHEBI:30616"/>
        <dbReference type="ChEBI" id="CHEBI:61560"/>
        <dbReference type="ChEBI" id="CHEBI:73316"/>
        <dbReference type="ChEBI" id="CHEBI:456216"/>
        <dbReference type="EC" id="2.7.4.6"/>
    </reaction>
</comment>
<comment type="catalytic activity">
    <reaction evidence="6">
        <text>a ribonucleoside 5'-diphosphate + ATP = a ribonucleoside 5'-triphosphate + ADP</text>
        <dbReference type="Rhea" id="RHEA:18113"/>
        <dbReference type="ChEBI" id="CHEBI:30616"/>
        <dbReference type="ChEBI" id="CHEBI:57930"/>
        <dbReference type="ChEBI" id="CHEBI:61557"/>
        <dbReference type="ChEBI" id="CHEBI:456216"/>
        <dbReference type="EC" id="2.7.4.6"/>
    </reaction>
</comment>
<comment type="cofactor">
    <cofactor evidence="2">
        <name>Mg(2+)</name>
        <dbReference type="ChEBI" id="CHEBI:18420"/>
    </cofactor>
</comment>
<comment type="subcellular location">
    <subcellularLocation>
        <location evidence="6">Plastid</location>
        <location evidence="6">Chloroplast</location>
    </subcellularLocation>
</comment>
<comment type="similarity">
    <text evidence="3">Belongs to the NDK family.</text>
</comment>
<reference evidence="6 7" key="1">
    <citation type="submission" date="2002-07" db="EMBL/GenBank/DDBJ databases">
        <title>NDPK from aluminum-tolerant cultured tobacco cells.</title>
        <authorList>
            <person name="Yamamoto Y."/>
            <person name="Mitoh C."/>
        </authorList>
    </citation>
    <scope>NUCLEOTIDE SEQUENCE [MRNA]</scope>
    <source>
        <strain evidence="4">cv. Samsun NN</strain>
    </source>
</reference>
<reference evidence="6 7" key="2">
    <citation type="submission" date="2000-10" db="UniProtKB">
        <authorList>
            <person name="Yamamoto Y."/>
            <person name="Asakura Y."/>
            <person name="Yamada H."/>
            <person name="Matsumoto H."/>
        </authorList>
    </citation>
    <scope>PROTEIN SEQUENCE OF 80-89</scope>
    <source>
        <strain>cv. Samsun</strain>
    </source>
</reference>
<name>NDK2_TOBAC</name>
<dbReference type="EC" id="2.7.4.6"/>
<dbReference type="EMBL" id="AB088360">
    <property type="protein sequence ID" value="BAC55280.1"/>
    <property type="molecule type" value="mRNA"/>
</dbReference>
<dbReference type="RefSeq" id="NP_001311894.1">
    <property type="nucleotide sequence ID" value="NM_001324965.1"/>
</dbReference>
<dbReference type="RefSeq" id="XP_016442628.1">
    <property type="nucleotide sequence ID" value="XM_016587142.1"/>
</dbReference>
<dbReference type="SMR" id="Q852S5"/>
<dbReference type="STRING" id="4097.Q852S5"/>
<dbReference type="PaxDb" id="4097-Q852S5"/>
<dbReference type="GeneID" id="107768038"/>
<dbReference type="KEGG" id="nta:107768038"/>
<dbReference type="OMA" id="AEEHYQD"/>
<dbReference type="OrthoDB" id="1287340at2759"/>
<dbReference type="Proteomes" id="UP000084051">
    <property type="component" value="Unplaced"/>
</dbReference>
<dbReference type="GO" id="GO:0009507">
    <property type="term" value="C:chloroplast"/>
    <property type="evidence" value="ECO:0007669"/>
    <property type="project" value="UniProtKB-SubCell"/>
</dbReference>
<dbReference type="GO" id="GO:0005524">
    <property type="term" value="F:ATP binding"/>
    <property type="evidence" value="ECO:0007669"/>
    <property type="project" value="UniProtKB-KW"/>
</dbReference>
<dbReference type="GO" id="GO:0046872">
    <property type="term" value="F:metal ion binding"/>
    <property type="evidence" value="ECO:0007669"/>
    <property type="project" value="UniProtKB-KW"/>
</dbReference>
<dbReference type="GO" id="GO:0004550">
    <property type="term" value="F:nucleoside diphosphate kinase activity"/>
    <property type="evidence" value="ECO:0007669"/>
    <property type="project" value="UniProtKB-EC"/>
</dbReference>
<dbReference type="GO" id="GO:0006241">
    <property type="term" value="P:CTP biosynthetic process"/>
    <property type="evidence" value="ECO:0007669"/>
    <property type="project" value="InterPro"/>
</dbReference>
<dbReference type="GO" id="GO:0006183">
    <property type="term" value="P:GTP biosynthetic process"/>
    <property type="evidence" value="ECO:0007669"/>
    <property type="project" value="InterPro"/>
</dbReference>
<dbReference type="GO" id="GO:0006228">
    <property type="term" value="P:UTP biosynthetic process"/>
    <property type="evidence" value="ECO:0007669"/>
    <property type="project" value="InterPro"/>
</dbReference>
<dbReference type="CDD" id="cd04413">
    <property type="entry name" value="NDPk_I"/>
    <property type="match status" value="1"/>
</dbReference>
<dbReference type="FunFam" id="3.30.70.141:FF:000002">
    <property type="entry name" value="Nucleoside diphosphate kinase"/>
    <property type="match status" value="1"/>
</dbReference>
<dbReference type="Gene3D" id="3.30.70.141">
    <property type="entry name" value="Nucleoside diphosphate kinase-like domain"/>
    <property type="match status" value="1"/>
</dbReference>
<dbReference type="HAMAP" id="MF_00451">
    <property type="entry name" value="NDP_kinase"/>
    <property type="match status" value="1"/>
</dbReference>
<dbReference type="InterPro" id="IPR034907">
    <property type="entry name" value="NDK-like_dom"/>
</dbReference>
<dbReference type="InterPro" id="IPR036850">
    <property type="entry name" value="NDK-like_dom_sf"/>
</dbReference>
<dbReference type="InterPro" id="IPR001564">
    <property type="entry name" value="Nucleoside_diP_kinase"/>
</dbReference>
<dbReference type="InterPro" id="IPR023005">
    <property type="entry name" value="Nucleoside_diP_kinase_AS"/>
</dbReference>
<dbReference type="NCBIfam" id="NF001908">
    <property type="entry name" value="PRK00668.1"/>
    <property type="match status" value="1"/>
</dbReference>
<dbReference type="PANTHER" id="PTHR11349">
    <property type="entry name" value="NUCLEOSIDE DIPHOSPHATE KINASE"/>
    <property type="match status" value="1"/>
</dbReference>
<dbReference type="Pfam" id="PF00334">
    <property type="entry name" value="NDK"/>
    <property type="match status" value="1"/>
</dbReference>
<dbReference type="PRINTS" id="PR01243">
    <property type="entry name" value="NUCDPKINASE"/>
</dbReference>
<dbReference type="SMART" id="SM00562">
    <property type="entry name" value="NDK"/>
    <property type="match status" value="1"/>
</dbReference>
<dbReference type="SUPFAM" id="SSF54919">
    <property type="entry name" value="Nucleoside diphosphate kinase, NDK"/>
    <property type="match status" value="1"/>
</dbReference>
<dbReference type="PROSITE" id="PS00469">
    <property type="entry name" value="NDPK"/>
    <property type="match status" value="1"/>
</dbReference>
<dbReference type="PROSITE" id="PS51374">
    <property type="entry name" value="NDPK_LIKE"/>
    <property type="match status" value="1"/>
</dbReference>
<sequence>MGCLSVVGASPCVSSSALSSPTSRLSCAPSCKLILNPIKKNHHLAAFQPAVHLFASNQSRSHASKRNHTTRIFLPHLVASMEEVEETYIMIKPDGVQRGLVGEIISRFEKKGFKLTGLKLFHCPKELAEEHYKDLQSKPFFPKLIDYITSGPVVCMAWEGVGVVASARKLIGATNPLNAEPGTIRGDLAVQTGRNVVHGSDSPDNGKREIALWFGEGELCSWTPVQEPWLIE</sequence>
<protein>
    <recommendedName>
        <fullName>Nucleoside diphosphate kinase 2, chloroplastic</fullName>
        <ecNumber>2.7.4.6</ecNumber>
    </recommendedName>
    <alternativeName>
        <fullName>Nucleoside diphosphate kinase II</fullName>
        <shortName>NDK II</shortName>
        <shortName>NDP kinase II</shortName>
        <shortName>NDPK II</shortName>
    </alternativeName>
</protein>
<feature type="transit peptide" description="Chloroplast" evidence="5">
    <location>
        <begin position="1"/>
        <end position="79"/>
    </location>
</feature>
<feature type="chain" id="PRO_0000257978" description="Nucleoside diphosphate kinase 2, chloroplastic">
    <location>
        <begin position="80"/>
        <end position="232"/>
    </location>
</feature>
<feature type="active site" description="Pros-phosphohistidine intermediate" evidence="2">
    <location>
        <position position="198"/>
    </location>
</feature>
<feature type="binding site" evidence="2">
    <location>
        <position position="92"/>
    </location>
    <ligand>
        <name>ATP</name>
        <dbReference type="ChEBI" id="CHEBI:30616"/>
    </ligand>
</feature>
<feature type="binding site" evidence="2">
    <location>
        <position position="140"/>
    </location>
    <ligand>
        <name>ATP</name>
        <dbReference type="ChEBI" id="CHEBI:30616"/>
    </ligand>
</feature>
<feature type="binding site" evidence="2">
    <location>
        <position position="168"/>
    </location>
    <ligand>
        <name>ATP</name>
        <dbReference type="ChEBI" id="CHEBI:30616"/>
    </ligand>
</feature>
<feature type="binding site" evidence="2">
    <location>
        <position position="174"/>
    </location>
    <ligand>
        <name>ATP</name>
        <dbReference type="ChEBI" id="CHEBI:30616"/>
    </ligand>
</feature>
<feature type="binding site" evidence="2">
    <location>
        <position position="185"/>
    </location>
    <ligand>
        <name>ATP</name>
        <dbReference type="ChEBI" id="CHEBI:30616"/>
    </ligand>
</feature>
<feature type="binding site" evidence="2">
    <location>
        <position position="195"/>
    </location>
    <ligand>
        <name>ATP</name>
        <dbReference type="ChEBI" id="CHEBI:30616"/>
    </ligand>
</feature>
<evidence type="ECO:0000250" key="1">
    <source>
        <dbReference type="UniProtKB" id="O64903"/>
    </source>
</evidence>
<evidence type="ECO:0000250" key="2">
    <source>
        <dbReference type="UniProtKB" id="P08879"/>
    </source>
</evidence>
<evidence type="ECO:0000255" key="3"/>
<evidence type="ECO:0000269" key="4">
    <source ref="1"/>
</evidence>
<evidence type="ECO:0000269" key="5">
    <source ref="2"/>
</evidence>
<evidence type="ECO:0000305" key="6"/>
<evidence type="ECO:0000312" key="7">
    <source>
        <dbReference type="EMBL" id="BAC55280.1"/>
    </source>
</evidence>
<proteinExistence type="evidence at protein level"/>
<gene>
    <name evidence="1" type="primary">NDPK2</name>
</gene>
<accession>Q852S5</accession>
<accession>P82855</accession>
<keyword id="KW-0067">ATP-binding</keyword>
<keyword id="KW-0150">Chloroplast</keyword>
<keyword id="KW-0903">Direct protein sequencing</keyword>
<keyword id="KW-0418">Kinase</keyword>
<keyword id="KW-0460">Magnesium</keyword>
<keyword id="KW-0479">Metal-binding</keyword>
<keyword id="KW-0546">Nucleotide metabolism</keyword>
<keyword id="KW-0547">Nucleotide-binding</keyword>
<keyword id="KW-0597">Phosphoprotein</keyword>
<keyword id="KW-0934">Plastid</keyword>
<keyword id="KW-1185">Reference proteome</keyword>
<keyword id="KW-0808">Transferase</keyword>
<keyword id="KW-0809">Transit peptide</keyword>
<organism>
    <name type="scientific">Nicotiana tabacum</name>
    <name type="common">Common tobacco</name>
    <dbReference type="NCBI Taxonomy" id="4097"/>
    <lineage>
        <taxon>Eukaryota</taxon>
        <taxon>Viridiplantae</taxon>
        <taxon>Streptophyta</taxon>
        <taxon>Embryophyta</taxon>
        <taxon>Tracheophyta</taxon>
        <taxon>Spermatophyta</taxon>
        <taxon>Magnoliopsida</taxon>
        <taxon>eudicotyledons</taxon>
        <taxon>Gunneridae</taxon>
        <taxon>Pentapetalae</taxon>
        <taxon>asterids</taxon>
        <taxon>lamiids</taxon>
        <taxon>Solanales</taxon>
        <taxon>Solanaceae</taxon>
        <taxon>Nicotianoideae</taxon>
        <taxon>Nicotianeae</taxon>
        <taxon>Nicotiana</taxon>
    </lineage>
</organism>